<protein>
    <recommendedName>
        <fullName>Ubiquitin-associated domain-containing protein 1</fullName>
        <shortName>UBA domain-containing protein 1</shortName>
    </recommendedName>
    <alternativeName>
        <fullName>E3 ubiquitin-protein ligase subunit KPC2</fullName>
    </alternativeName>
    <alternativeName>
        <fullName>Kip1 ubiquitination-promoting complex protein 2</fullName>
    </alternativeName>
</protein>
<gene>
    <name type="primary">ubac1</name>
    <name type="synonym">kpc2</name>
    <name type="synonym">ubadc1</name>
    <name type="ORF">TEgg011a06.1</name>
</gene>
<accession>Q28DG7</accession>
<sequence>MFVQEEKIFAGKGLRLHICSLDGAEWLEEVTEEITVEKLKEKCLKHCSHGSLEDPKSLTHHKLVHASSERVLSDTKTLAEENLQDNDVLLLVKKRAPPPTPKMAEVSADEKRKQDQKAPDKDAILKATAGLPARSTDRTVAQHNMRDFQTELRKILVSLIEVAQKLLALNPDAIELFKKANAMLDEDDEDRVDEVALRQLTEMGFPESRAVKALRLNHMSVTQAMEWLIEHADDPAADAPLPCENSSEAAGGLATGEAETKPTLGAGAEDPKDELTEIFKKIRRKREFRPDPRAVIALMEMGFDEKEVIDALRVNNNQQDAACEWLLGDRKPSPEDLDKGIDTTSPLFQAILDNPVVQLGLTNPKTLLAFEDMLENPLNSTQWMNDPETGPVMLQISRIFQTLNRT</sequence>
<proteinExistence type="evidence at transcript level"/>
<dbReference type="EMBL" id="CR855524">
    <property type="protein sequence ID" value="CAJ81848.1"/>
    <property type="molecule type" value="mRNA"/>
</dbReference>
<dbReference type="RefSeq" id="NP_001016826.1">
    <property type="nucleotide sequence ID" value="NM_001016826.2"/>
</dbReference>
<dbReference type="SMR" id="Q28DG7"/>
<dbReference type="FunCoup" id="Q28DG7">
    <property type="interactions" value="616"/>
</dbReference>
<dbReference type="STRING" id="8364.ENSXETP00000000350"/>
<dbReference type="PaxDb" id="8364-ENSXETP00000053515"/>
<dbReference type="GeneID" id="549580"/>
<dbReference type="KEGG" id="xtr:549580"/>
<dbReference type="AGR" id="Xenbase:XB-GENE-997434"/>
<dbReference type="CTD" id="10422"/>
<dbReference type="Xenbase" id="XB-GENE-997434">
    <property type="gene designation" value="ubac1"/>
</dbReference>
<dbReference type="eggNOG" id="ENOG502QQQ6">
    <property type="taxonomic scope" value="Eukaryota"/>
</dbReference>
<dbReference type="InParanoid" id="Q28DG7"/>
<dbReference type="OMA" id="WLIQNDS"/>
<dbReference type="OrthoDB" id="336240at2759"/>
<dbReference type="Reactome" id="R-XTR-983168">
    <property type="pathway name" value="Antigen processing: Ubiquitination &amp; Proteasome degradation"/>
</dbReference>
<dbReference type="UniPathway" id="UPA00143"/>
<dbReference type="Proteomes" id="UP000008143">
    <property type="component" value="Chromosome 8"/>
</dbReference>
<dbReference type="GO" id="GO:0005737">
    <property type="term" value="C:cytoplasm"/>
    <property type="evidence" value="ECO:0007669"/>
    <property type="project" value="UniProtKB-SubCell"/>
</dbReference>
<dbReference type="GO" id="GO:0031593">
    <property type="term" value="F:polyubiquitin modification-dependent protein binding"/>
    <property type="evidence" value="ECO:0000250"/>
    <property type="project" value="UniProtKB"/>
</dbReference>
<dbReference type="GO" id="GO:0070628">
    <property type="term" value="F:proteasome binding"/>
    <property type="evidence" value="ECO:0000250"/>
    <property type="project" value="UniProtKB"/>
</dbReference>
<dbReference type="GO" id="GO:0051604">
    <property type="term" value="P:protein maturation"/>
    <property type="evidence" value="ECO:0000250"/>
    <property type="project" value="UniProtKB"/>
</dbReference>
<dbReference type="GO" id="GO:0016567">
    <property type="term" value="P:protein ubiquitination"/>
    <property type="evidence" value="ECO:0000250"/>
    <property type="project" value="UniProtKB"/>
</dbReference>
<dbReference type="CDD" id="cd14303">
    <property type="entry name" value="UBA1_KPC2"/>
    <property type="match status" value="1"/>
</dbReference>
<dbReference type="CDD" id="cd14304">
    <property type="entry name" value="UBA2_KPC2"/>
    <property type="match status" value="1"/>
</dbReference>
<dbReference type="FunFam" id="1.10.260.100:FF:000006">
    <property type="entry name" value="Ubiquitin-associated domain-containing protein 1"/>
    <property type="match status" value="1"/>
</dbReference>
<dbReference type="Gene3D" id="1.10.260.100">
    <property type="match status" value="1"/>
</dbReference>
<dbReference type="Gene3D" id="1.10.8.10">
    <property type="entry name" value="DNA helicase RuvA subunit, C-terminal domain"/>
    <property type="match status" value="2"/>
</dbReference>
<dbReference type="Gene3D" id="3.10.20.90">
    <property type="entry name" value="Phosphatidylinositol 3-kinase Catalytic Subunit, Chain A, domain 1"/>
    <property type="match status" value="1"/>
</dbReference>
<dbReference type="InterPro" id="IPR006636">
    <property type="entry name" value="STI1_HS-bd"/>
</dbReference>
<dbReference type="InterPro" id="IPR015940">
    <property type="entry name" value="UBA"/>
</dbReference>
<dbReference type="InterPro" id="IPR009060">
    <property type="entry name" value="UBA-like_sf"/>
</dbReference>
<dbReference type="InterPro" id="IPR041926">
    <property type="entry name" value="UBA1_UBAC1"/>
</dbReference>
<dbReference type="InterPro" id="IPR041927">
    <property type="entry name" value="UBA2_UBAC1"/>
</dbReference>
<dbReference type="InterPro" id="IPR052476">
    <property type="entry name" value="UBAC1"/>
</dbReference>
<dbReference type="InterPro" id="IPR000626">
    <property type="entry name" value="Ubiquitin-like_dom"/>
</dbReference>
<dbReference type="InterPro" id="IPR029071">
    <property type="entry name" value="Ubiquitin-like_domsf"/>
</dbReference>
<dbReference type="PANTHER" id="PTHR46738">
    <property type="entry name" value="UBIQUITIN-ASSOCIATED DOMAIN-CONTAINING PROTEIN 1"/>
    <property type="match status" value="1"/>
</dbReference>
<dbReference type="PANTHER" id="PTHR46738:SF1">
    <property type="entry name" value="UBIQUITIN-ASSOCIATED DOMAIN-CONTAINING PROTEIN 1"/>
    <property type="match status" value="1"/>
</dbReference>
<dbReference type="Pfam" id="PF22562">
    <property type="entry name" value="UBA_7"/>
    <property type="match status" value="2"/>
</dbReference>
<dbReference type="Pfam" id="PF23326">
    <property type="entry name" value="UBL_UBAC1"/>
    <property type="match status" value="1"/>
</dbReference>
<dbReference type="SMART" id="SM00727">
    <property type="entry name" value="STI1"/>
    <property type="match status" value="1"/>
</dbReference>
<dbReference type="SMART" id="SM00165">
    <property type="entry name" value="UBA"/>
    <property type="match status" value="2"/>
</dbReference>
<dbReference type="SUPFAM" id="SSF46934">
    <property type="entry name" value="UBA-like"/>
    <property type="match status" value="2"/>
</dbReference>
<dbReference type="SUPFAM" id="SSF54236">
    <property type="entry name" value="Ubiquitin-like"/>
    <property type="match status" value="1"/>
</dbReference>
<dbReference type="PROSITE" id="PS50030">
    <property type="entry name" value="UBA"/>
    <property type="match status" value="2"/>
</dbReference>
<dbReference type="PROSITE" id="PS50053">
    <property type="entry name" value="UBIQUITIN_2"/>
    <property type="match status" value="1"/>
</dbReference>
<evidence type="ECO:0000250" key="1">
    <source>
        <dbReference type="UniProtKB" id="Q9BSL1"/>
    </source>
</evidence>
<evidence type="ECO:0000255" key="2">
    <source>
        <dbReference type="PROSITE-ProRule" id="PRU00212"/>
    </source>
</evidence>
<evidence type="ECO:0000255" key="3">
    <source>
        <dbReference type="PROSITE-ProRule" id="PRU00214"/>
    </source>
</evidence>
<evidence type="ECO:0000256" key="4">
    <source>
        <dbReference type="SAM" id="MobiDB-lite"/>
    </source>
</evidence>
<keyword id="KW-0963">Cytoplasm</keyword>
<keyword id="KW-1185">Reference proteome</keyword>
<keyword id="KW-0677">Repeat</keyword>
<keyword id="KW-0833">Ubl conjugation pathway</keyword>
<feature type="chain" id="PRO_0000250453" description="Ubiquitin-associated domain-containing protein 1">
    <location>
        <begin position="1"/>
        <end position="406"/>
    </location>
</feature>
<feature type="domain" description="Ubiquitin-like" evidence="3">
    <location>
        <begin position="14"/>
        <end position="98"/>
    </location>
</feature>
<feature type="domain" description="UBA 1" evidence="2">
    <location>
        <begin position="186"/>
        <end position="231"/>
    </location>
</feature>
<feature type="domain" description="UBA 2" evidence="2">
    <location>
        <begin position="289"/>
        <end position="329"/>
    </location>
</feature>
<feature type="domain" description="STI1">
    <location>
        <begin position="354"/>
        <end position="393"/>
    </location>
</feature>
<feature type="region of interest" description="Disordered" evidence="4">
    <location>
        <begin position="95"/>
        <end position="122"/>
    </location>
</feature>
<feature type="region of interest" description="Disordered" evidence="4">
    <location>
        <begin position="238"/>
        <end position="272"/>
    </location>
</feature>
<feature type="compositionally biased region" description="Basic and acidic residues" evidence="4">
    <location>
        <begin position="108"/>
        <end position="122"/>
    </location>
</feature>
<feature type="compositionally biased region" description="Low complexity" evidence="4">
    <location>
        <begin position="238"/>
        <end position="257"/>
    </location>
</feature>
<name>UBAC1_XENTR</name>
<organism>
    <name type="scientific">Xenopus tropicalis</name>
    <name type="common">Western clawed frog</name>
    <name type="synonym">Silurana tropicalis</name>
    <dbReference type="NCBI Taxonomy" id="8364"/>
    <lineage>
        <taxon>Eukaryota</taxon>
        <taxon>Metazoa</taxon>
        <taxon>Chordata</taxon>
        <taxon>Craniata</taxon>
        <taxon>Vertebrata</taxon>
        <taxon>Euteleostomi</taxon>
        <taxon>Amphibia</taxon>
        <taxon>Batrachia</taxon>
        <taxon>Anura</taxon>
        <taxon>Pipoidea</taxon>
        <taxon>Pipidae</taxon>
        <taxon>Xenopodinae</taxon>
        <taxon>Xenopus</taxon>
        <taxon>Silurana</taxon>
    </lineage>
</organism>
<comment type="function">
    <text evidence="1">Non-catalytic component of the KPC complex, a E3 ubiquitin-protein ligase complex that mediates polyubiquitination of target proteins, such as CDKN1B and NFKB1. Within the KPC complex, UBAC1 acts as an adapter that promotes the transfer of target proteins that have been polyubiquitinated by RNF123/KPC1 to the 26S proteasome.</text>
</comment>
<comment type="pathway">
    <text evidence="1">Protein modification; protein ubiquitination.</text>
</comment>
<comment type="subunit">
    <text evidence="1">Component of the KPC complex.</text>
</comment>
<comment type="subcellular location">
    <subcellularLocation>
        <location evidence="1">Cytoplasm</location>
    </subcellularLocation>
</comment>
<comment type="domain">
    <text evidence="1">The UBA domains recognize and bind polyubiquitinated proteins.</text>
</comment>
<reference key="1">
    <citation type="submission" date="2006-06" db="EMBL/GenBank/DDBJ databases">
        <authorList>
            <consortium name="NIH - Xenopus Gene Collection (XGC) project"/>
        </authorList>
    </citation>
    <scope>NUCLEOTIDE SEQUENCE [LARGE SCALE MRNA]</scope>
    <source>
        <tissue>Egg</tissue>
    </source>
</reference>